<comment type="function">
    <text evidence="1">Component of the A-type ATP synthase that produces ATP from ADP in the presence of a proton gradient across the membrane. The B chain is a regulatory subunit.</text>
</comment>
<comment type="subunit">
    <text evidence="1">Has multiple subunits with at least A(3), B(3), C, D, E, F, H, I and proteolipid K(x).</text>
</comment>
<comment type="subcellular location">
    <subcellularLocation>
        <location evidence="1">Cell membrane</location>
        <topology evidence="1">Peripheral membrane protein</topology>
    </subcellularLocation>
</comment>
<comment type="similarity">
    <text evidence="1">Belongs to the ATPase alpha/beta chains family.</text>
</comment>
<feature type="chain" id="PRO_1000059383" description="A-type ATP synthase subunit B">
    <location>
        <begin position="1"/>
        <end position="463"/>
    </location>
</feature>
<gene>
    <name evidence="1" type="primary">atpB</name>
    <name type="ordered locus">Mthe_1608</name>
</gene>
<organism>
    <name type="scientific">Methanothrix thermoacetophila (strain DSM 6194 / JCM 14653 / NBRC 101360 / PT)</name>
    <name type="common">Methanosaeta thermophila</name>
    <dbReference type="NCBI Taxonomy" id="349307"/>
    <lineage>
        <taxon>Archaea</taxon>
        <taxon>Methanobacteriati</taxon>
        <taxon>Methanobacteriota</taxon>
        <taxon>Stenosarchaea group</taxon>
        <taxon>Methanomicrobia</taxon>
        <taxon>Methanotrichales</taxon>
        <taxon>Methanotrichaceae</taxon>
        <taxon>Methanothrix</taxon>
    </lineage>
</organism>
<dbReference type="EMBL" id="CP000477">
    <property type="protein sequence ID" value="ABK15375.1"/>
    <property type="molecule type" value="Genomic_DNA"/>
</dbReference>
<dbReference type="RefSeq" id="WP_011696753.1">
    <property type="nucleotide sequence ID" value="NC_008553.1"/>
</dbReference>
<dbReference type="SMR" id="A0B9K1"/>
<dbReference type="STRING" id="349307.Mthe_1608"/>
<dbReference type="GeneID" id="4462039"/>
<dbReference type="KEGG" id="mtp:Mthe_1608"/>
<dbReference type="HOGENOM" id="CLU_022916_0_0_2"/>
<dbReference type="OrthoDB" id="32941at2157"/>
<dbReference type="Proteomes" id="UP000000674">
    <property type="component" value="Chromosome"/>
</dbReference>
<dbReference type="GO" id="GO:0005886">
    <property type="term" value="C:plasma membrane"/>
    <property type="evidence" value="ECO:0007669"/>
    <property type="project" value="UniProtKB-SubCell"/>
</dbReference>
<dbReference type="GO" id="GO:0005524">
    <property type="term" value="F:ATP binding"/>
    <property type="evidence" value="ECO:0007669"/>
    <property type="project" value="UniProtKB-UniRule"/>
</dbReference>
<dbReference type="GO" id="GO:0046933">
    <property type="term" value="F:proton-transporting ATP synthase activity, rotational mechanism"/>
    <property type="evidence" value="ECO:0007669"/>
    <property type="project" value="UniProtKB-UniRule"/>
</dbReference>
<dbReference type="GO" id="GO:0042777">
    <property type="term" value="P:proton motive force-driven plasma membrane ATP synthesis"/>
    <property type="evidence" value="ECO:0007669"/>
    <property type="project" value="UniProtKB-UniRule"/>
</dbReference>
<dbReference type="CDD" id="cd18112">
    <property type="entry name" value="ATP-synt_V_A-type_beta_C"/>
    <property type="match status" value="1"/>
</dbReference>
<dbReference type="CDD" id="cd18118">
    <property type="entry name" value="ATP-synt_V_A-type_beta_N"/>
    <property type="match status" value="1"/>
</dbReference>
<dbReference type="CDD" id="cd01135">
    <property type="entry name" value="V_A-ATPase_B"/>
    <property type="match status" value="1"/>
</dbReference>
<dbReference type="Gene3D" id="3.40.50.12240">
    <property type="match status" value="1"/>
</dbReference>
<dbReference type="HAMAP" id="MF_00310">
    <property type="entry name" value="ATP_synth_B_arch"/>
    <property type="match status" value="1"/>
</dbReference>
<dbReference type="InterPro" id="IPR055190">
    <property type="entry name" value="ATP-synt_VA_C"/>
</dbReference>
<dbReference type="InterPro" id="IPR020003">
    <property type="entry name" value="ATPase_a/bsu_AS"/>
</dbReference>
<dbReference type="InterPro" id="IPR004100">
    <property type="entry name" value="ATPase_F1/V1/A1_a/bsu_N"/>
</dbReference>
<dbReference type="InterPro" id="IPR000194">
    <property type="entry name" value="ATPase_F1/V1/A1_a/bsu_nucl-bd"/>
</dbReference>
<dbReference type="InterPro" id="IPR027417">
    <property type="entry name" value="P-loop_NTPase"/>
</dbReference>
<dbReference type="InterPro" id="IPR022879">
    <property type="entry name" value="V-ATPase_su_B/beta"/>
</dbReference>
<dbReference type="NCBIfam" id="NF003235">
    <property type="entry name" value="PRK04196.1"/>
    <property type="match status" value="1"/>
</dbReference>
<dbReference type="PANTHER" id="PTHR43389">
    <property type="entry name" value="V-TYPE PROTON ATPASE SUBUNIT B"/>
    <property type="match status" value="1"/>
</dbReference>
<dbReference type="PANTHER" id="PTHR43389:SF4">
    <property type="entry name" value="V-TYPE PROTON ATPASE SUBUNIT B"/>
    <property type="match status" value="1"/>
</dbReference>
<dbReference type="Pfam" id="PF00006">
    <property type="entry name" value="ATP-synt_ab"/>
    <property type="match status" value="1"/>
</dbReference>
<dbReference type="Pfam" id="PF02874">
    <property type="entry name" value="ATP-synt_ab_N"/>
    <property type="match status" value="1"/>
</dbReference>
<dbReference type="Pfam" id="PF22919">
    <property type="entry name" value="ATP-synt_VA_C"/>
    <property type="match status" value="1"/>
</dbReference>
<dbReference type="PIRSF" id="PIRSF039114">
    <property type="entry name" value="V-ATPsynth_beta/V-ATPase_B"/>
    <property type="match status" value="1"/>
</dbReference>
<dbReference type="SUPFAM" id="SSF47917">
    <property type="entry name" value="C-terminal domain of alpha and beta subunits of F1 ATP synthase"/>
    <property type="match status" value="1"/>
</dbReference>
<dbReference type="SUPFAM" id="SSF52540">
    <property type="entry name" value="P-loop containing nucleoside triphosphate hydrolases"/>
    <property type="match status" value="1"/>
</dbReference>
<dbReference type="PROSITE" id="PS00152">
    <property type="entry name" value="ATPASE_ALPHA_BETA"/>
    <property type="match status" value="1"/>
</dbReference>
<sequence>MTKEYKTITEISGPLVFVEKTEPVGYGELVEIRTASGEVKRGQVLDTSDEIVVVQVFEGTGGLSKDSSVRFTGDVIKMPLSPSIIGRVLSGSGRPRDGGPPIVPEVEREIIGAAINPASREKPRAFIQTGISTIDGTNTLVRGQKLPIFSGAGLPHNDVALQIARQAKVLGEAEEFAVVFCAMGITNEEAQHFMADFERTGALERAVIFLNLADDPAVERLLTPKLGLTTAEYLAFDLDMHVLVIYTDMTNYCESLRQMGAAREEVPGRRGYPGYMYTDLATNYERAGIIKGKKGSITQFPILTMPGDDITHPIPDLSGYITEGQLIVSRELHRKGIYPPIDIRPSLSRLMNSGIGAGHTREDHRAVSDQLYAYYAEGCDLRGLAAIVGKEALSERDKLILEFADQFERRFVNQGRDEDRSIIETLTIGWELLSMLPETMLTRIDDKFIKKYHPKYAGTAKKE</sequence>
<evidence type="ECO:0000255" key="1">
    <source>
        <dbReference type="HAMAP-Rule" id="MF_00310"/>
    </source>
</evidence>
<reference key="1">
    <citation type="submission" date="2006-10" db="EMBL/GenBank/DDBJ databases">
        <title>Complete sequence of Methanosaeta thermophila PT.</title>
        <authorList>
            <consortium name="US DOE Joint Genome Institute"/>
            <person name="Copeland A."/>
            <person name="Lucas S."/>
            <person name="Lapidus A."/>
            <person name="Barry K."/>
            <person name="Detter J.C."/>
            <person name="Glavina del Rio T."/>
            <person name="Hammon N."/>
            <person name="Israni S."/>
            <person name="Pitluck S."/>
            <person name="Chain P."/>
            <person name="Malfatti S."/>
            <person name="Shin M."/>
            <person name="Vergez L."/>
            <person name="Schmutz J."/>
            <person name="Larimer F."/>
            <person name="Land M."/>
            <person name="Hauser L."/>
            <person name="Kyrpides N."/>
            <person name="Kim E."/>
            <person name="Smith K.S."/>
            <person name="Ingram-Smith C."/>
            <person name="Richardson P."/>
        </authorList>
    </citation>
    <scope>NUCLEOTIDE SEQUENCE [LARGE SCALE GENOMIC DNA]</scope>
    <source>
        <strain>DSM 6194 / JCM 14653 / NBRC 101360 / PT</strain>
    </source>
</reference>
<keyword id="KW-0066">ATP synthesis</keyword>
<keyword id="KW-1003">Cell membrane</keyword>
<keyword id="KW-0375">Hydrogen ion transport</keyword>
<keyword id="KW-0406">Ion transport</keyword>
<keyword id="KW-0472">Membrane</keyword>
<keyword id="KW-1185">Reference proteome</keyword>
<keyword id="KW-0813">Transport</keyword>
<accession>A0B9K1</accession>
<proteinExistence type="inferred from homology"/>
<name>AATB_METTP</name>
<protein>
    <recommendedName>
        <fullName evidence="1">A-type ATP synthase subunit B</fullName>
    </recommendedName>
</protein>